<feature type="chain" id="PRO_0000360697" description="Uncharacterized HTH-type transcriptional regulator YdfD">
    <location>
        <begin position="1"/>
        <end position="482"/>
    </location>
</feature>
<feature type="domain" description="HTH gntR-type" evidence="2">
    <location>
        <begin position="12"/>
        <end position="80"/>
    </location>
</feature>
<feature type="DNA-binding region" description="H-T-H motif" evidence="2">
    <location>
        <begin position="40"/>
        <end position="59"/>
    </location>
</feature>
<feature type="modified residue" description="N6-(pyridoxal phosphate)lysine" evidence="1">
    <location>
        <position position="325"/>
    </location>
</feature>
<name>YDFD_BACSU</name>
<dbReference type="EMBL" id="AB001488">
    <property type="protein sequence ID" value="BAA19371.1"/>
    <property type="molecule type" value="Genomic_DNA"/>
</dbReference>
<dbReference type="EMBL" id="AL009126">
    <property type="protein sequence ID" value="CAB12344.1"/>
    <property type="molecule type" value="Genomic_DNA"/>
</dbReference>
<dbReference type="PIR" id="B69780">
    <property type="entry name" value="B69780"/>
</dbReference>
<dbReference type="RefSeq" id="NP_388418.1">
    <property type="nucleotide sequence ID" value="NC_000964.3"/>
</dbReference>
<dbReference type="RefSeq" id="WP_003244019.1">
    <property type="nucleotide sequence ID" value="NZ_OZ025638.1"/>
</dbReference>
<dbReference type="SMR" id="P96681"/>
<dbReference type="FunCoup" id="P96681">
    <property type="interactions" value="383"/>
</dbReference>
<dbReference type="STRING" id="224308.BSU05370"/>
<dbReference type="PaxDb" id="224308-BSU05370"/>
<dbReference type="EnsemblBacteria" id="CAB12344">
    <property type="protein sequence ID" value="CAB12344"/>
    <property type="gene ID" value="BSU_05370"/>
</dbReference>
<dbReference type="GeneID" id="939903"/>
<dbReference type="KEGG" id="bsu:BSU05370"/>
<dbReference type="PATRIC" id="fig|224308.179.peg.574"/>
<dbReference type="eggNOG" id="COG1167">
    <property type="taxonomic scope" value="Bacteria"/>
</dbReference>
<dbReference type="InParanoid" id="P96681"/>
<dbReference type="OrthoDB" id="9802328at2"/>
<dbReference type="PhylomeDB" id="P96681"/>
<dbReference type="BioCyc" id="BSUB:BSU05370-MONOMER"/>
<dbReference type="Proteomes" id="UP000001570">
    <property type="component" value="Chromosome"/>
</dbReference>
<dbReference type="GO" id="GO:0003677">
    <property type="term" value="F:DNA binding"/>
    <property type="evidence" value="ECO:0007669"/>
    <property type="project" value="UniProtKB-KW"/>
</dbReference>
<dbReference type="GO" id="GO:0003700">
    <property type="term" value="F:DNA-binding transcription factor activity"/>
    <property type="evidence" value="ECO:0007669"/>
    <property type="project" value="InterPro"/>
</dbReference>
<dbReference type="GO" id="GO:0030170">
    <property type="term" value="F:pyridoxal phosphate binding"/>
    <property type="evidence" value="ECO:0007669"/>
    <property type="project" value="InterPro"/>
</dbReference>
<dbReference type="GO" id="GO:0008483">
    <property type="term" value="F:transaminase activity"/>
    <property type="evidence" value="ECO:0000318"/>
    <property type="project" value="GO_Central"/>
</dbReference>
<dbReference type="GO" id="GO:1901605">
    <property type="term" value="P:alpha-amino acid metabolic process"/>
    <property type="evidence" value="ECO:0000318"/>
    <property type="project" value="GO_Central"/>
</dbReference>
<dbReference type="GO" id="GO:0009058">
    <property type="term" value="P:biosynthetic process"/>
    <property type="evidence" value="ECO:0007669"/>
    <property type="project" value="InterPro"/>
</dbReference>
<dbReference type="CDD" id="cd00609">
    <property type="entry name" value="AAT_like"/>
    <property type="match status" value="1"/>
</dbReference>
<dbReference type="CDD" id="cd07377">
    <property type="entry name" value="WHTH_GntR"/>
    <property type="match status" value="1"/>
</dbReference>
<dbReference type="FunFam" id="1.10.10.10:FF:000079">
    <property type="entry name" value="GntR family transcriptional regulator"/>
    <property type="match status" value="1"/>
</dbReference>
<dbReference type="FunFam" id="3.40.640.10:FF:000023">
    <property type="entry name" value="Transcriptional regulator, GntR family"/>
    <property type="match status" value="1"/>
</dbReference>
<dbReference type="Gene3D" id="3.90.1150.10">
    <property type="entry name" value="Aspartate Aminotransferase, domain 1"/>
    <property type="match status" value="1"/>
</dbReference>
<dbReference type="Gene3D" id="3.40.640.10">
    <property type="entry name" value="Type I PLP-dependent aspartate aminotransferase-like (Major domain)"/>
    <property type="match status" value="1"/>
</dbReference>
<dbReference type="Gene3D" id="1.10.10.10">
    <property type="entry name" value="Winged helix-like DNA-binding domain superfamily/Winged helix DNA-binding domain"/>
    <property type="match status" value="1"/>
</dbReference>
<dbReference type="InterPro" id="IPR004839">
    <property type="entry name" value="Aminotransferase_I/II_large"/>
</dbReference>
<dbReference type="InterPro" id="IPR051446">
    <property type="entry name" value="HTH_trans_reg/aminotransferase"/>
</dbReference>
<dbReference type="InterPro" id="IPR015424">
    <property type="entry name" value="PyrdxlP-dep_Trfase"/>
</dbReference>
<dbReference type="InterPro" id="IPR015421">
    <property type="entry name" value="PyrdxlP-dep_Trfase_major"/>
</dbReference>
<dbReference type="InterPro" id="IPR015422">
    <property type="entry name" value="PyrdxlP-dep_Trfase_small"/>
</dbReference>
<dbReference type="InterPro" id="IPR000524">
    <property type="entry name" value="Tscrpt_reg_HTH_GntR"/>
</dbReference>
<dbReference type="InterPro" id="IPR036388">
    <property type="entry name" value="WH-like_DNA-bd_sf"/>
</dbReference>
<dbReference type="InterPro" id="IPR036390">
    <property type="entry name" value="WH_DNA-bd_sf"/>
</dbReference>
<dbReference type="PANTHER" id="PTHR46577">
    <property type="entry name" value="HTH-TYPE TRANSCRIPTIONAL REGULATORY PROTEIN GABR"/>
    <property type="match status" value="1"/>
</dbReference>
<dbReference type="PANTHER" id="PTHR46577:SF2">
    <property type="entry name" value="TRANSCRIPTIONAL REGULATORY PROTEIN"/>
    <property type="match status" value="1"/>
</dbReference>
<dbReference type="Pfam" id="PF00155">
    <property type="entry name" value="Aminotran_1_2"/>
    <property type="match status" value="1"/>
</dbReference>
<dbReference type="Pfam" id="PF00392">
    <property type="entry name" value="GntR"/>
    <property type="match status" value="1"/>
</dbReference>
<dbReference type="PRINTS" id="PR00035">
    <property type="entry name" value="HTHGNTR"/>
</dbReference>
<dbReference type="SMART" id="SM00345">
    <property type="entry name" value="HTH_GNTR"/>
    <property type="match status" value="1"/>
</dbReference>
<dbReference type="SUPFAM" id="SSF53383">
    <property type="entry name" value="PLP-dependent transferases"/>
    <property type="match status" value="1"/>
</dbReference>
<dbReference type="SUPFAM" id="SSF46785">
    <property type="entry name" value="Winged helix' DNA-binding domain"/>
    <property type="match status" value="1"/>
</dbReference>
<dbReference type="PROSITE" id="PS50949">
    <property type="entry name" value="HTH_GNTR"/>
    <property type="match status" value="1"/>
</dbReference>
<sequence length="482" mass="54239">MSFPEEKKMKKLPKYRQIVHFIKEKIGNGEWPIGSKIPSQRTLAKDFQVNRSTVITALEELMADGLIEGTMGKGTVVINNTWTLMAKNSAPDWDQYVTSGIQMPSRKIVQEINQSESNTDLIQLSKGELSAEIFPLAVMKEMMGKVSQHMEAFGYEEPKGYLPLREALSNYLKTIGINVSSSSILIVSGALQALQLISMGLLQRGSTVYLDQPSYLYSLHVFQSAGMKLTGLPMDNEGLLPENVHLTRGERGRAILYTNPCFHNPTGILMSKKRREEILAVSENTQLPIIEDDIYRELWIDEIPPYPIKTIDKNGHVLYIGSLSKTLSPGLRIGWIVGPEPVIERLSDIKMQTDYGSSSLSQRVAAEWFTSGHYQQHVEKVRQQLKVRRELALSALETHLKEVATWNIPKGGFFVWIKILPSISMKLLYTKALSKGILINLGSIYAQEKGNYIRLSYAYASLEDLQKGIYELGLMIKELASR</sequence>
<evidence type="ECO:0000250" key="1"/>
<evidence type="ECO:0000255" key="2">
    <source>
        <dbReference type="PROSITE-ProRule" id="PRU00307"/>
    </source>
</evidence>
<evidence type="ECO:0000305" key="3"/>
<keyword id="KW-0032">Aminotransferase</keyword>
<keyword id="KW-0238">DNA-binding</keyword>
<keyword id="KW-0663">Pyridoxal phosphate</keyword>
<keyword id="KW-1185">Reference proteome</keyword>
<keyword id="KW-0804">Transcription</keyword>
<keyword id="KW-0805">Transcription regulation</keyword>
<keyword id="KW-0808">Transferase</keyword>
<protein>
    <recommendedName>
        <fullName>Uncharacterized HTH-type transcriptional regulator YdfD</fullName>
    </recommendedName>
</protein>
<comment type="cofactor">
    <cofactor evidence="1">
        <name>pyridoxal 5'-phosphate</name>
        <dbReference type="ChEBI" id="CHEBI:597326"/>
    </cofactor>
</comment>
<comment type="similarity">
    <text evidence="3">In the C-terminal section; belongs to the class-I pyridoxal-phosphate-dependent aminotransferase family.</text>
</comment>
<gene>
    <name type="primary">ydfD</name>
    <name type="ordered locus">BSU05370</name>
</gene>
<accession>P96681</accession>
<accession>Q797H0</accession>
<organism>
    <name type="scientific">Bacillus subtilis (strain 168)</name>
    <dbReference type="NCBI Taxonomy" id="224308"/>
    <lineage>
        <taxon>Bacteria</taxon>
        <taxon>Bacillati</taxon>
        <taxon>Bacillota</taxon>
        <taxon>Bacilli</taxon>
        <taxon>Bacillales</taxon>
        <taxon>Bacillaceae</taxon>
        <taxon>Bacillus</taxon>
    </lineage>
</organism>
<proteinExistence type="inferred from homology"/>
<reference key="1">
    <citation type="submission" date="1997-03" db="EMBL/GenBank/DDBJ databases">
        <title>A 148 kbp sequence of the region between 35 and 47 degree of the Bacillus subtilis genome.</title>
        <authorList>
            <person name="Kasahara Y."/>
            <person name="Nakai S."/>
            <person name="Lee S."/>
            <person name="Sadaie Y."/>
            <person name="Ogasawara N."/>
        </authorList>
    </citation>
    <scope>NUCLEOTIDE SEQUENCE [GENOMIC DNA]</scope>
    <source>
        <strain>168</strain>
    </source>
</reference>
<reference key="2">
    <citation type="journal article" date="1997" name="Nature">
        <title>The complete genome sequence of the Gram-positive bacterium Bacillus subtilis.</title>
        <authorList>
            <person name="Kunst F."/>
            <person name="Ogasawara N."/>
            <person name="Moszer I."/>
            <person name="Albertini A.M."/>
            <person name="Alloni G."/>
            <person name="Azevedo V."/>
            <person name="Bertero M.G."/>
            <person name="Bessieres P."/>
            <person name="Bolotin A."/>
            <person name="Borchert S."/>
            <person name="Borriss R."/>
            <person name="Boursier L."/>
            <person name="Brans A."/>
            <person name="Braun M."/>
            <person name="Brignell S.C."/>
            <person name="Bron S."/>
            <person name="Brouillet S."/>
            <person name="Bruschi C.V."/>
            <person name="Caldwell B."/>
            <person name="Capuano V."/>
            <person name="Carter N.M."/>
            <person name="Choi S.-K."/>
            <person name="Codani J.-J."/>
            <person name="Connerton I.F."/>
            <person name="Cummings N.J."/>
            <person name="Daniel R.A."/>
            <person name="Denizot F."/>
            <person name="Devine K.M."/>
            <person name="Duesterhoeft A."/>
            <person name="Ehrlich S.D."/>
            <person name="Emmerson P.T."/>
            <person name="Entian K.-D."/>
            <person name="Errington J."/>
            <person name="Fabret C."/>
            <person name="Ferrari E."/>
            <person name="Foulger D."/>
            <person name="Fritz C."/>
            <person name="Fujita M."/>
            <person name="Fujita Y."/>
            <person name="Fuma S."/>
            <person name="Galizzi A."/>
            <person name="Galleron N."/>
            <person name="Ghim S.-Y."/>
            <person name="Glaser P."/>
            <person name="Goffeau A."/>
            <person name="Golightly E.J."/>
            <person name="Grandi G."/>
            <person name="Guiseppi G."/>
            <person name="Guy B.J."/>
            <person name="Haga K."/>
            <person name="Haiech J."/>
            <person name="Harwood C.R."/>
            <person name="Henaut A."/>
            <person name="Hilbert H."/>
            <person name="Holsappel S."/>
            <person name="Hosono S."/>
            <person name="Hullo M.-F."/>
            <person name="Itaya M."/>
            <person name="Jones L.-M."/>
            <person name="Joris B."/>
            <person name="Karamata D."/>
            <person name="Kasahara Y."/>
            <person name="Klaerr-Blanchard M."/>
            <person name="Klein C."/>
            <person name="Kobayashi Y."/>
            <person name="Koetter P."/>
            <person name="Koningstein G."/>
            <person name="Krogh S."/>
            <person name="Kumano M."/>
            <person name="Kurita K."/>
            <person name="Lapidus A."/>
            <person name="Lardinois S."/>
            <person name="Lauber J."/>
            <person name="Lazarevic V."/>
            <person name="Lee S.-M."/>
            <person name="Levine A."/>
            <person name="Liu H."/>
            <person name="Masuda S."/>
            <person name="Mauel C."/>
            <person name="Medigue C."/>
            <person name="Medina N."/>
            <person name="Mellado R.P."/>
            <person name="Mizuno M."/>
            <person name="Moestl D."/>
            <person name="Nakai S."/>
            <person name="Noback M."/>
            <person name="Noone D."/>
            <person name="O'Reilly M."/>
            <person name="Ogawa K."/>
            <person name="Ogiwara A."/>
            <person name="Oudega B."/>
            <person name="Park S.-H."/>
            <person name="Parro V."/>
            <person name="Pohl T.M."/>
            <person name="Portetelle D."/>
            <person name="Porwollik S."/>
            <person name="Prescott A.M."/>
            <person name="Presecan E."/>
            <person name="Pujic P."/>
            <person name="Purnelle B."/>
            <person name="Rapoport G."/>
            <person name="Rey M."/>
            <person name="Reynolds S."/>
            <person name="Rieger M."/>
            <person name="Rivolta C."/>
            <person name="Rocha E."/>
            <person name="Roche B."/>
            <person name="Rose M."/>
            <person name="Sadaie Y."/>
            <person name="Sato T."/>
            <person name="Scanlan E."/>
            <person name="Schleich S."/>
            <person name="Schroeter R."/>
            <person name="Scoffone F."/>
            <person name="Sekiguchi J."/>
            <person name="Sekowska A."/>
            <person name="Seror S.J."/>
            <person name="Serror P."/>
            <person name="Shin B.-S."/>
            <person name="Soldo B."/>
            <person name="Sorokin A."/>
            <person name="Tacconi E."/>
            <person name="Takagi T."/>
            <person name="Takahashi H."/>
            <person name="Takemaru K."/>
            <person name="Takeuchi M."/>
            <person name="Tamakoshi A."/>
            <person name="Tanaka T."/>
            <person name="Terpstra P."/>
            <person name="Tognoni A."/>
            <person name="Tosato V."/>
            <person name="Uchiyama S."/>
            <person name="Vandenbol M."/>
            <person name="Vannier F."/>
            <person name="Vassarotti A."/>
            <person name="Viari A."/>
            <person name="Wambutt R."/>
            <person name="Wedler E."/>
            <person name="Wedler H."/>
            <person name="Weitzenegger T."/>
            <person name="Winters P."/>
            <person name="Wipat A."/>
            <person name="Yamamoto H."/>
            <person name="Yamane K."/>
            <person name="Yasumoto K."/>
            <person name="Yata K."/>
            <person name="Yoshida K."/>
            <person name="Yoshikawa H.-F."/>
            <person name="Zumstein E."/>
            <person name="Yoshikawa H."/>
            <person name="Danchin A."/>
        </authorList>
    </citation>
    <scope>NUCLEOTIDE SEQUENCE [LARGE SCALE GENOMIC DNA]</scope>
    <source>
        <strain>168</strain>
    </source>
</reference>
<reference key="3">
    <citation type="journal article" date="2002" name="Mol. Microbiol.">
        <title>GabR, a member of a novel protein family, regulates the utilization of gamma-aminobutyrate in Bacillus subtilis.</title>
        <authorList>
            <person name="Belitsky B.R."/>
            <person name="Sonenshein A.L."/>
        </authorList>
    </citation>
    <scope>GENE FAMILY</scope>
</reference>